<name>RL15_AZOPC</name>
<accession>B6YQ67</accession>
<proteinExistence type="inferred from homology"/>
<sequence>MNLSSLKPVKGSTKTCKRVGRGQGSGCGGTSTRGHKGQKSRSGYSKKIGFEGGQMPIQRRLPKFGFKSINRVEYKAVNLSVIQSLIDTRCLAKIGIDDLVDAGIVSANRLVKILAGGIITSVVEVTAHAFSEKAEKAILKVGGTVIRTLKQ</sequence>
<evidence type="ECO:0000255" key="1">
    <source>
        <dbReference type="HAMAP-Rule" id="MF_01341"/>
    </source>
</evidence>
<evidence type="ECO:0000256" key="2">
    <source>
        <dbReference type="SAM" id="MobiDB-lite"/>
    </source>
</evidence>
<evidence type="ECO:0000305" key="3"/>
<reference key="1">
    <citation type="journal article" date="2008" name="Science">
        <title>Genome of an endosymbiont coupling N2 fixation to cellulolysis within RT protist cells in termite gut.</title>
        <authorList>
            <person name="Hongoh Y."/>
            <person name="Sharma V.K."/>
            <person name="Prakash T."/>
            <person name="Noda S."/>
            <person name="Toh H."/>
            <person name="Taylor T.D."/>
            <person name="Kudo T."/>
            <person name="Sakaki Y."/>
            <person name="Toyoda A."/>
            <person name="Hattori M."/>
            <person name="Ohkuma M."/>
        </authorList>
    </citation>
    <scope>NUCLEOTIDE SEQUENCE [LARGE SCALE GENOMIC DNA]</scope>
</reference>
<organism>
    <name type="scientific">Azobacteroides pseudotrichonymphae genomovar. CFP2</name>
    <dbReference type="NCBI Taxonomy" id="511995"/>
    <lineage>
        <taxon>Bacteria</taxon>
        <taxon>Pseudomonadati</taxon>
        <taxon>Bacteroidota</taxon>
        <taxon>Bacteroidia</taxon>
        <taxon>Bacteroidales</taxon>
        <taxon>Candidatus Azobacteroides</taxon>
    </lineage>
</organism>
<feature type="chain" id="PRO_1000142771" description="Large ribosomal subunit protein uL15">
    <location>
        <begin position="1"/>
        <end position="151"/>
    </location>
</feature>
<feature type="region of interest" description="Disordered" evidence="2">
    <location>
        <begin position="1"/>
        <end position="45"/>
    </location>
</feature>
<feature type="compositionally biased region" description="Gly residues" evidence="2">
    <location>
        <begin position="21"/>
        <end position="31"/>
    </location>
</feature>
<dbReference type="EMBL" id="AP010656">
    <property type="protein sequence ID" value="BAG83339.1"/>
    <property type="molecule type" value="Genomic_DNA"/>
</dbReference>
<dbReference type="RefSeq" id="WP_012573100.1">
    <property type="nucleotide sequence ID" value="NC_011565.1"/>
</dbReference>
<dbReference type="SMR" id="B6YQ67"/>
<dbReference type="STRING" id="511995.CFPG_076"/>
<dbReference type="KEGG" id="aps:CFPG_076"/>
<dbReference type="eggNOG" id="COG0200">
    <property type="taxonomic scope" value="Bacteria"/>
</dbReference>
<dbReference type="HOGENOM" id="CLU_055188_4_2_10"/>
<dbReference type="OrthoDB" id="9810293at2"/>
<dbReference type="Proteomes" id="UP000000723">
    <property type="component" value="Chromosome"/>
</dbReference>
<dbReference type="GO" id="GO:0022625">
    <property type="term" value="C:cytosolic large ribosomal subunit"/>
    <property type="evidence" value="ECO:0007669"/>
    <property type="project" value="TreeGrafter"/>
</dbReference>
<dbReference type="GO" id="GO:0019843">
    <property type="term" value="F:rRNA binding"/>
    <property type="evidence" value="ECO:0007669"/>
    <property type="project" value="UniProtKB-UniRule"/>
</dbReference>
<dbReference type="GO" id="GO:0003735">
    <property type="term" value="F:structural constituent of ribosome"/>
    <property type="evidence" value="ECO:0007669"/>
    <property type="project" value="InterPro"/>
</dbReference>
<dbReference type="GO" id="GO:0006412">
    <property type="term" value="P:translation"/>
    <property type="evidence" value="ECO:0007669"/>
    <property type="project" value="UniProtKB-UniRule"/>
</dbReference>
<dbReference type="Gene3D" id="3.100.10.10">
    <property type="match status" value="1"/>
</dbReference>
<dbReference type="HAMAP" id="MF_01341">
    <property type="entry name" value="Ribosomal_uL15"/>
    <property type="match status" value="1"/>
</dbReference>
<dbReference type="InterPro" id="IPR030878">
    <property type="entry name" value="Ribosomal_uL15"/>
</dbReference>
<dbReference type="InterPro" id="IPR021131">
    <property type="entry name" value="Ribosomal_uL15/eL18"/>
</dbReference>
<dbReference type="InterPro" id="IPR036227">
    <property type="entry name" value="Ribosomal_uL15/eL18_sf"/>
</dbReference>
<dbReference type="InterPro" id="IPR005749">
    <property type="entry name" value="Ribosomal_uL15_bac-type"/>
</dbReference>
<dbReference type="InterPro" id="IPR001196">
    <property type="entry name" value="Ribosomal_uL15_CS"/>
</dbReference>
<dbReference type="NCBIfam" id="TIGR01071">
    <property type="entry name" value="rplO_bact"/>
    <property type="match status" value="1"/>
</dbReference>
<dbReference type="PANTHER" id="PTHR12934">
    <property type="entry name" value="50S RIBOSOMAL PROTEIN L15"/>
    <property type="match status" value="1"/>
</dbReference>
<dbReference type="PANTHER" id="PTHR12934:SF11">
    <property type="entry name" value="LARGE RIBOSOMAL SUBUNIT PROTEIN UL15M"/>
    <property type="match status" value="1"/>
</dbReference>
<dbReference type="Pfam" id="PF00828">
    <property type="entry name" value="Ribosomal_L27A"/>
    <property type="match status" value="1"/>
</dbReference>
<dbReference type="SUPFAM" id="SSF52080">
    <property type="entry name" value="Ribosomal proteins L15p and L18e"/>
    <property type="match status" value="1"/>
</dbReference>
<dbReference type="PROSITE" id="PS00475">
    <property type="entry name" value="RIBOSOMAL_L15"/>
    <property type="match status" value="1"/>
</dbReference>
<comment type="function">
    <text evidence="1">Binds to the 23S rRNA.</text>
</comment>
<comment type="subunit">
    <text evidence="1">Part of the 50S ribosomal subunit.</text>
</comment>
<comment type="similarity">
    <text evidence="1">Belongs to the universal ribosomal protein uL15 family.</text>
</comment>
<gene>
    <name evidence="1" type="primary">rplO</name>
    <name type="ordered locus">CFPG_076</name>
</gene>
<protein>
    <recommendedName>
        <fullName evidence="1">Large ribosomal subunit protein uL15</fullName>
    </recommendedName>
    <alternativeName>
        <fullName evidence="3">50S ribosomal protein L15</fullName>
    </alternativeName>
</protein>
<keyword id="KW-1185">Reference proteome</keyword>
<keyword id="KW-0687">Ribonucleoprotein</keyword>
<keyword id="KW-0689">Ribosomal protein</keyword>
<keyword id="KW-0694">RNA-binding</keyword>
<keyword id="KW-0699">rRNA-binding</keyword>